<dbReference type="EC" id="2.3.1.-" evidence="1"/>
<dbReference type="EMBL" id="CP000266">
    <property type="protein sequence ID" value="ABF04590.1"/>
    <property type="status" value="ALT_INIT"/>
    <property type="molecule type" value="Genomic_DNA"/>
</dbReference>
<dbReference type="RefSeq" id="WP_000406000.1">
    <property type="nucleotide sequence ID" value="NC_008258.1"/>
</dbReference>
<dbReference type="SMR" id="Q0T275"/>
<dbReference type="KEGG" id="sfv:SFV_2486"/>
<dbReference type="HOGENOM" id="CLU_013985_34_1_6"/>
<dbReference type="Proteomes" id="UP000000659">
    <property type="component" value="Chromosome"/>
</dbReference>
<dbReference type="GO" id="GO:0016747">
    <property type="term" value="F:acyltransferase activity, transferring groups other than amino-acyl groups"/>
    <property type="evidence" value="ECO:0007669"/>
    <property type="project" value="UniProtKB-UniRule"/>
</dbReference>
<dbReference type="CDD" id="cd04301">
    <property type="entry name" value="NAT_SF"/>
    <property type="match status" value="1"/>
</dbReference>
<dbReference type="Gene3D" id="3.40.630.30">
    <property type="match status" value="1"/>
</dbReference>
<dbReference type="HAMAP" id="MF_01127">
    <property type="entry name" value="Acetyltransf_YpeA"/>
    <property type="match status" value="1"/>
</dbReference>
<dbReference type="InterPro" id="IPR023072">
    <property type="entry name" value="Acetyltransferase_YpeA"/>
</dbReference>
<dbReference type="InterPro" id="IPR016181">
    <property type="entry name" value="Acyl_CoA_acyltransferase"/>
</dbReference>
<dbReference type="InterPro" id="IPR050832">
    <property type="entry name" value="Bact_Acetyltransf"/>
</dbReference>
<dbReference type="InterPro" id="IPR000182">
    <property type="entry name" value="GNAT_dom"/>
</dbReference>
<dbReference type="NCBIfam" id="NF002959">
    <property type="entry name" value="PRK03624.1"/>
    <property type="match status" value="1"/>
</dbReference>
<dbReference type="PANTHER" id="PTHR43877">
    <property type="entry name" value="AMINOALKYLPHOSPHONATE N-ACETYLTRANSFERASE-RELATED-RELATED"/>
    <property type="match status" value="1"/>
</dbReference>
<dbReference type="Pfam" id="PF00583">
    <property type="entry name" value="Acetyltransf_1"/>
    <property type="match status" value="1"/>
</dbReference>
<dbReference type="SUPFAM" id="SSF55729">
    <property type="entry name" value="Acyl-CoA N-acyltransferases (Nat)"/>
    <property type="match status" value="1"/>
</dbReference>
<dbReference type="PROSITE" id="PS51186">
    <property type="entry name" value="GNAT"/>
    <property type="match status" value="1"/>
</dbReference>
<feature type="chain" id="PRO_0000298447" description="Acetyltransferase YpeA">
    <location>
        <begin position="1"/>
        <end position="141"/>
    </location>
</feature>
<feature type="domain" description="N-acetyltransferase" evidence="1">
    <location>
        <begin position="1"/>
        <end position="141"/>
    </location>
</feature>
<proteinExistence type="inferred from homology"/>
<organism>
    <name type="scientific">Shigella flexneri serotype 5b (strain 8401)</name>
    <dbReference type="NCBI Taxonomy" id="373384"/>
    <lineage>
        <taxon>Bacteria</taxon>
        <taxon>Pseudomonadati</taxon>
        <taxon>Pseudomonadota</taxon>
        <taxon>Gammaproteobacteria</taxon>
        <taxon>Enterobacterales</taxon>
        <taxon>Enterobacteriaceae</taxon>
        <taxon>Shigella</taxon>
    </lineage>
</organism>
<sequence>MEIRVFRQEDFEEVITLWERCDLLRPWNDPEMDIERKMNHDVSLFLVAEVNGEVVGTVMGGYDGHRGSAYYLGVHPEFRGRGIANALLNRLEKKLIARGCPKIQINVPEDNDMVLGMYERLGYEHADVLSLGKRLIEDEEY</sequence>
<name>YPEA_SHIF8</name>
<keyword id="KW-0012">Acyltransferase</keyword>
<keyword id="KW-0808">Transferase</keyword>
<protein>
    <recommendedName>
        <fullName evidence="1">Acetyltransferase YpeA</fullName>
        <ecNumber evidence="1">2.3.1.-</ecNumber>
    </recommendedName>
</protein>
<accession>Q0T275</accession>
<gene>
    <name evidence="1" type="primary">ypeA</name>
    <name type="ordered locus">SFV_2486</name>
</gene>
<reference key="1">
    <citation type="journal article" date="2006" name="BMC Genomics">
        <title>Complete genome sequence of Shigella flexneri 5b and comparison with Shigella flexneri 2a.</title>
        <authorList>
            <person name="Nie H."/>
            <person name="Yang F."/>
            <person name="Zhang X."/>
            <person name="Yang J."/>
            <person name="Chen L."/>
            <person name="Wang J."/>
            <person name="Xiong Z."/>
            <person name="Peng J."/>
            <person name="Sun L."/>
            <person name="Dong J."/>
            <person name="Xue Y."/>
            <person name="Xu X."/>
            <person name="Chen S."/>
            <person name="Yao Z."/>
            <person name="Shen Y."/>
            <person name="Jin Q."/>
        </authorList>
    </citation>
    <scope>NUCLEOTIDE SEQUENCE [LARGE SCALE GENOMIC DNA]</scope>
    <source>
        <strain>8401</strain>
    </source>
</reference>
<evidence type="ECO:0000255" key="1">
    <source>
        <dbReference type="HAMAP-Rule" id="MF_01127"/>
    </source>
</evidence>
<evidence type="ECO:0000305" key="2"/>
<comment type="similarity">
    <text evidence="1">Belongs to the acetyltransferase family. YpeA subfamily.</text>
</comment>
<comment type="sequence caution" evidence="2">
    <conflict type="erroneous initiation">
        <sequence resource="EMBL-CDS" id="ABF04590"/>
    </conflict>
</comment>